<accession>H2A7G5</accession>
<sequence>MMNATENQIFVETVSDQELEMLIGGADRGWIKTLTKDCPNVISSICAGTIITACKNCA</sequence>
<proteinExistence type="evidence at protein level"/>
<gene>
    <name evidence="5" type="ordered locus">SMA_1409</name>
</gene>
<reference key="1">
    <citation type="journal article" date="2012" name="J. Bacteriol.">
        <title>Complete genome sequence of the dairy isolate Streptococcus macedonicus ACA-DC 198.</title>
        <authorList>
            <person name="Papadimitriou K."/>
            <person name="Ferreira S."/>
            <person name="Papandreou N.C."/>
            <person name="Mavrogonatou E."/>
            <person name="Supply P."/>
            <person name="Pot B."/>
            <person name="Tsakalidou E."/>
        </authorList>
    </citation>
    <scope>NUCLEOTIDE SEQUENCE [LARGE SCALE GENOMIC DNA]</scope>
    <source>
        <strain>ACA-DC 198</strain>
    </source>
</reference>
<reference key="2">
    <citation type="journal article" date="2013" name="Food Microbiol.">
        <title>Macedovicin, the second food-grade lantibiotic produced by Streptococcus macedonicus ACA-DC 198.</title>
        <authorList>
            <person name="Georgalaki M."/>
            <person name="Papadimitriou K."/>
            <person name="Anastasiou R."/>
            <person name="Pot B."/>
            <person name="Van Driessche G."/>
            <person name="Devreese B."/>
            <person name="Tsakalidou E."/>
        </authorList>
    </citation>
    <scope>PROTEIN SEQUENCE OF 26-45</scope>
    <scope>FUNCTION</scope>
    <scope>MASS SPECTROMETRY</scope>
    <scope>DEHYDRATION AT THR-33 AND THR-35</scope>
    <scope>LANTHIONINE CROSS-LINKS</scope>
    <source>
        <strain>ACA-DC 198</strain>
    </source>
</reference>
<dbReference type="EMBL" id="HE613569">
    <property type="protein sequence ID" value="CCF02700.1"/>
    <property type="molecule type" value="Genomic_DNA"/>
</dbReference>
<dbReference type="SMR" id="H2A7G5"/>
<dbReference type="KEGG" id="smn:SMA_1409"/>
<dbReference type="HOGENOM" id="CLU_3022031_0_0_9"/>
<dbReference type="GO" id="GO:0005576">
    <property type="term" value="C:extracellular region"/>
    <property type="evidence" value="ECO:0007669"/>
    <property type="project" value="UniProtKB-SubCell"/>
</dbReference>
<dbReference type="GO" id="GO:0005102">
    <property type="term" value="F:signaling receptor binding"/>
    <property type="evidence" value="ECO:0007669"/>
    <property type="project" value="UniProtKB-KW"/>
</dbReference>
<dbReference type="GO" id="GO:0042742">
    <property type="term" value="P:defense response to bacterium"/>
    <property type="evidence" value="ECO:0007669"/>
    <property type="project" value="UniProtKB-KW"/>
</dbReference>
<dbReference type="GO" id="GO:0031640">
    <property type="term" value="P:killing of cells of another organism"/>
    <property type="evidence" value="ECO:0007669"/>
    <property type="project" value="UniProtKB-KW"/>
</dbReference>
<dbReference type="InterPro" id="IPR007682">
    <property type="entry name" value="Lantibiotic_typ-A_Lactobact"/>
</dbReference>
<dbReference type="Pfam" id="PF04604">
    <property type="entry name" value="L_biotic_typeA"/>
    <property type="match status" value="1"/>
</dbReference>
<name>LANA_STRMD</name>
<evidence type="ECO:0000269" key="1">
    <source>
    </source>
</evidence>
<evidence type="ECO:0000303" key="2">
    <source>
    </source>
</evidence>
<evidence type="ECO:0000305" key="3"/>
<evidence type="ECO:0000305" key="4">
    <source>
    </source>
</evidence>
<evidence type="ECO:0000312" key="5">
    <source>
        <dbReference type="EMBL" id="CCF02700.1"/>
    </source>
</evidence>
<organism>
    <name type="scientific">Streptococcus macedonicus (strain ACA-DC 198)</name>
    <dbReference type="NCBI Taxonomy" id="1116231"/>
    <lineage>
        <taxon>Bacteria</taxon>
        <taxon>Bacillati</taxon>
        <taxon>Bacillota</taxon>
        <taxon>Bacilli</taxon>
        <taxon>Lactobacillales</taxon>
        <taxon>Streptococcaceae</taxon>
        <taxon>Streptococcus</taxon>
    </lineage>
</organism>
<protein>
    <recommendedName>
        <fullName evidence="2">Lantibiotic macedovicin</fullName>
    </recommendedName>
</protein>
<comment type="function">
    <text evidence="1 3">Lanthionine-containing peptide antibiotic (lantibiotic) active on Gram-positive bacteria. Macedovicin inhibits a broad spectrum of lactic acid bacteria, several food spoilage species (e.g. Clostridium spp.) and oral streptococci (PubMed:23122510). The bactericidal activity of lantibiotics is based on depolarization of energized bacterial cytoplasmic membranes, initiated by the formation of aqueous transmembrane pores.</text>
</comment>
<comment type="subcellular location">
    <subcellularLocation>
        <location evidence="4">Secreted</location>
    </subcellularLocation>
</comment>
<comment type="PTM">
    <text evidence="1 3">Maturation of macedovicin involves the enzymatic dehydration of Thr-33 and Thr-35 into dehydrobutyrine residues, that can form a beta-methyllanthionine bond with Cys-38 and Cys-57, respectively (PubMed:23122510). This is followed by membrane translocation and cleavage of the modified precursor.</text>
</comment>
<comment type="mass spectrometry"/>
<comment type="similarity">
    <text evidence="3">Belongs to the type A lantibiotic family.</text>
</comment>
<feature type="propeptide" id="PRO_0000443307" evidence="1">
    <location>
        <begin position="1"/>
        <end position="25"/>
    </location>
</feature>
<feature type="chain" id="PRO_0000443308" description="Lantibiotic macedovicin">
    <location>
        <begin position="26"/>
        <end position="58"/>
    </location>
</feature>
<feature type="modified residue" description="2,3-didehydrobutyrine" evidence="1">
    <location>
        <position position="33"/>
    </location>
</feature>
<feature type="modified residue" description="2,3-didehydrobutyrine" evidence="1">
    <location>
        <position position="35"/>
    </location>
</feature>
<feature type="disulfide bond" evidence="1">
    <location>
        <begin position="46"/>
        <end position="54"/>
    </location>
</feature>
<feature type="cross-link" description="Beta-methyllanthionine (Thr-Cys)" evidence="1">
    <location>
        <begin position="33"/>
        <end position="38"/>
    </location>
</feature>
<feature type="cross-link" description="Beta-methyllanthionine (Thr-Cys)" evidence="1">
    <location>
        <begin position="35"/>
        <end position="57"/>
    </location>
</feature>
<keyword id="KW-0044">Antibiotic</keyword>
<keyword id="KW-0929">Antimicrobial</keyword>
<keyword id="KW-0078">Bacteriocin</keyword>
<keyword id="KW-0903">Direct protein sequencing</keyword>
<keyword id="KW-1015">Disulfide bond</keyword>
<keyword id="KW-0425">Lantibiotic</keyword>
<keyword id="KW-0964">Secreted</keyword>
<keyword id="KW-0883">Thioether bond</keyword>